<protein>
    <recommendedName>
        <fullName>Calcium-activated chloride channel regulator 1</fullName>
        <ecNumber evidence="2">3.4.-.-</ecNumber>
    </recommendedName>
    <alternativeName>
        <fullName>Calcium-activated chloride channel family member 1</fullName>
        <shortName>eCLCA1</shortName>
    </alternativeName>
</protein>
<comment type="function">
    <text evidence="1">May be involved in mediating calcium-activated chloride conductance. May play critical roles in goblet cell metaplasia, mucus hypersecretion, cystic fibrosis and AHR. May be involved in the regulation of mucus production and/or secretion by goblet cells. Involved in the regulation of tissue inflammation in the innate immune response. May play a role as a tumor suppressor. Induces MUC5AC (By similarity).</text>
</comment>
<comment type="subcellular location">
    <subcellularLocation>
        <location evidence="1">Secreted</location>
        <location evidence="1">Extracellular space</location>
    </subcellularLocation>
</comment>
<comment type="tissue specificity">
    <text evidence="5">Expressed in mucin-producing cells in the respiratory and intestinal tracts, cutaneous sweat glands, and renal mucous glands (at protein level). Strong overexpression in the airways of horses with recurrent airway obstruction (at protein level).</text>
</comment>
<comment type="induction">
    <text evidence="5">Strongly up-regulated in bronchioles with recurrent airway obstruction (RAO).</text>
</comment>
<comment type="domain">
    <text evidence="2">The metalloprotease region is responsible for autoproteolytic processing. It can also cross-cleave other CLCA substrates.</text>
</comment>
<comment type="PTM">
    <text evidence="5">Glycosylated.</text>
</comment>
<comment type="PTM">
    <text evidence="2">The translation product is autoproteolytically cleaved by the metalloprotease domain in the endoplasmic reticulum into a N-terminal and a C-terminal products that remain physically associated with each other. The cleavage is necessary for calcium-activated chloride channel (CaCC) activation activity.</text>
</comment>
<comment type="similarity">
    <text evidence="6">Belongs to the CLCR family.</text>
</comment>
<evidence type="ECO:0000250" key="1"/>
<evidence type="ECO:0000250" key="2">
    <source>
        <dbReference type="UniProtKB" id="A8K7I4"/>
    </source>
</evidence>
<evidence type="ECO:0000255" key="3"/>
<evidence type="ECO:0000255" key="4">
    <source>
        <dbReference type="PROSITE-ProRule" id="PRU00219"/>
    </source>
</evidence>
<evidence type="ECO:0000269" key="5">
    <source>
    </source>
</evidence>
<evidence type="ECO:0000305" key="6"/>
<organism>
    <name type="scientific">Equus caballus</name>
    <name type="common">Horse</name>
    <dbReference type="NCBI Taxonomy" id="9796"/>
    <lineage>
        <taxon>Eukaryota</taxon>
        <taxon>Metazoa</taxon>
        <taxon>Chordata</taxon>
        <taxon>Craniata</taxon>
        <taxon>Vertebrata</taxon>
        <taxon>Euteleostomi</taxon>
        <taxon>Mammalia</taxon>
        <taxon>Eutheria</taxon>
        <taxon>Laurasiatheria</taxon>
        <taxon>Perissodactyla</taxon>
        <taxon>Equidae</taxon>
        <taxon>Equus</taxon>
    </lineage>
</organism>
<name>CLCA1_HORSE</name>
<accession>Q2TU62</accession>
<accession>Q1RQG8</accession>
<accession>Q1RQG9</accession>
<dbReference type="EC" id="3.4.-.-" evidence="2"/>
<dbReference type="EMBL" id="AY524856">
    <property type="protein sequence ID" value="AAT01505.1"/>
    <property type="molecule type" value="mRNA"/>
</dbReference>
<dbReference type="EMBL" id="AJ938085">
    <property type="protein sequence ID" value="CAI79650.1"/>
    <property type="molecule type" value="Genomic_DNA"/>
</dbReference>
<dbReference type="EMBL" id="AJ938086">
    <property type="protein sequence ID" value="CAI79651.1"/>
    <property type="molecule type" value="Genomic_DNA"/>
</dbReference>
<dbReference type="RefSeq" id="NP_001075268.1">
    <property type="nucleotide sequence ID" value="NM_001081799.2"/>
</dbReference>
<dbReference type="SMR" id="Q2TU62"/>
<dbReference type="FunCoup" id="Q2TU62">
    <property type="interactions" value="22"/>
</dbReference>
<dbReference type="STRING" id="9796.ENSECAP00000016845"/>
<dbReference type="MEROPS" id="M87.001"/>
<dbReference type="GlyCosmos" id="Q2TU62">
    <property type="glycosylation" value="7 sites, No reported glycans"/>
</dbReference>
<dbReference type="PaxDb" id="9796-ENSECAP00000016845"/>
<dbReference type="PeptideAtlas" id="Q2TU62"/>
<dbReference type="Ensembl" id="ENSECAT00000020519.4">
    <property type="protein sequence ID" value="ENSECAP00000016845.3"/>
    <property type="gene ID" value="ENSECAG00000057201.1"/>
</dbReference>
<dbReference type="GeneID" id="100009706"/>
<dbReference type="KEGG" id="ecb:100009706"/>
<dbReference type="CTD" id="1179"/>
<dbReference type="GeneTree" id="ENSGT00940000154682"/>
<dbReference type="HOGENOM" id="CLU_005812_0_1_1"/>
<dbReference type="InParanoid" id="Q2TU62"/>
<dbReference type="OrthoDB" id="687730at2759"/>
<dbReference type="TreeFam" id="TF328396"/>
<dbReference type="Proteomes" id="UP000002281">
    <property type="component" value="Chromosome 5"/>
</dbReference>
<dbReference type="GO" id="GO:0005576">
    <property type="term" value="C:extracellular region"/>
    <property type="evidence" value="ECO:0007669"/>
    <property type="project" value="UniProtKB-SubCell"/>
</dbReference>
<dbReference type="GO" id="GO:0005902">
    <property type="term" value="C:microvillus"/>
    <property type="evidence" value="ECO:0007669"/>
    <property type="project" value="Ensembl"/>
</dbReference>
<dbReference type="GO" id="GO:0005886">
    <property type="term" value="C:plasma membrane"/>
    <property type="evidence" value="ECO:0000318"/>
    <property type="project" value="GO_Central"/>
</dbReference>
<dbReference type="GO" id="GO:0030141">
    <property type="term" value="C:secretory granule"/>
    <property type="evidence" value="ECO:0007669"/>
    <property type="project" value="Ensembl"/>
</dbReference>
<dbReference type="GO" id="GO:0005229">
    <property type="term" value="F:intracellularly calcium-gated chloride channel activity"/>
    <property type="evidence" value="ECO:0000318"/>
    <property type="project" value="GO_Central"/>
</dbReference>
<dbReference type="GO" id="GO:0046872">
    <property type="term" value="F:metal ion binding"/>
    <property type="evidence" value="ECO:0007669"/>
    <property type="project" value="UniProtKB-KW"/>
</dbReference>
<dbReference type="GO" id="GO:0008237">
    <property type="term" value="F:metallopeptidase activity"/>
    <property type="evidence" value="ECO:0007669"/>
    <property type="project" value="UniProtKB-KW"/>
</dbReference>
<dbReference type="GO" id="GO:0006816">
    <property type="term" value="P:calcium ion transport"/>
    <property type="evidence" value="ECO:0007669"/>
    <property type="project" value="UniProtKB-KW"/>
</dbReference>
<dbReference type="GO" id="GO:0006508">
    <property type="term" value="P:proteolysis"/>
    <property type="evidence" value="ECO:0007669"/>
    <property type="project" value="UniProtKB-KW"/>
</dbReference>
<dbReference type="CDD" id="cd00198">
    <property type="entry name" value="vWFA"/>
    <property type="match status" value="1"/>
</dbReference>
<dbReference type="FunFam" id="2.60.40.10:FF:001134">
    <property type="entry name" value="Calcium-activated chloride channel regulator 1"/>
    <property type="match status" value="1"/>
</dbReference>
<dbReference type="FunFam" id="3.40.50.410:FF:000034">
    <property type="entry name" value="calcium-activated chloride channel regulator 1"/>
    <property type="match status" value="1"/>
</dbReference>
<dbReference type="Gene3D" id="2.60.40.10">
    <property type="entry name" value="Immunoglobulins"/>
    <property type="match status" value="1"/>
</dbReference>
<dbReference type="Gene3D" id="3.40.50.410">
    <property type="entry name" value="von Willebrand factor, type A domain"/>
    <property type="match status" value="1"/>
</dbReference>
<dbReference type="InterPro" id="IPR004727">
    <property type="entry name" value="CLCA_chordata"/>
</dbReference>
<dbReference type="InterPro" id="IPR013642">
    <property type="entry name" value="CLCA_N"/>
</dbReference>
<dbReference type="InterPro" id="IPR051266">
    <property type="entry name" value="CLCR"/>
</dbReference>
<dbReference type="InterPro" id="IPR013783">
    <property type="entry name" value="Ig-like_fold"/>
</dbReference>
<dbReference type="InterPro" id="IPR002035">
    <property type="entry name" value="VWF_A"/>
</dbReference>
<dbReference type="InterPro" id="IPR036465">
    <property type="entry name" value="vWFA_dom_sf"/>
</dbReference>
<dbReference type="NCBIfam" id="NF041940">
    <property type="entry name" value="choice_anch_X"/>
    <property type="match status" value="1"/>
</dbReference>
<dbReference type="NCBIfam" id="TIGR00868">
    <property type="entry name" value="hCaCC"/>
    <property type="match status" value="1"/>
</dbReference>
<dbReference type="PANTHER" id="PTHR10579">
    <property type="entry name" value="CALCIUM-ACTIVATED CHLORIDE CHANNEL REGULATOR"/>
    <property type="match status" value="1"/>
</dbReference>
<dbReference type="PANTHER" id="PTHR10579:SF52">
    <property type="entry name" value="CALCIUM-ACTIVATED CHLORIDE CHANNEL REGULATOR 1"/>
    <property type="match status" value="1"/>
</dbReference>
<dbReference type="Pfam" id="PF08434">
    <property type="entry name" value="CLCA"/>
    <property type="match status" value="1"/>
</dbReference>
<dbReference type="Pfam" id="PF13519">
    <property type="entry name" value="VWA_2"/>
    <property type="match status" value="1"/>
</dbReference>
<dbReference type="SMART" id="SM00327">
    <property type="entry name" value="VWA"/>
    <property type="match status" value="1"/>
</dbReference>
<dbReference type="SUPFAM" id="SSF53300">
    <property type="entry name" value="vWA-like"/>
    <property type="match status" value="1"/>
</dbReference>
<dbReference type="PROSITE" id="PS50234">
    <property type="entry name" value="VWFA"/>
    <property type="match status" value="1"/>
</dbReference>
<feature type="signal peptide" evidence="3">
    <location>
        <begin position="1"/>
        <end position="21"/>
    </location>
</feature>
<feature type="chain" id="PRO_0000333689" description="Calcium-activated chloride channel regulator 1">
    <location>
        <begin position="22"/>
        <end position="913"/>
    </location>
</feature>
<feature type="domain" description="VWFA" evidence="4">
    <location>
        <begin position="306"/>
        <end position="475"/>
    </location>
</feature>
<feature type="region of interest" description="Metalloprotease domain" evidence="2">
    <location>
        <begin position="46"/>
        <end position="199"/>
    </location>
</feature>
<feature type="active site" evidence="2">
    <location>
        <position position="157"/>
    </location>
</feature>
<feature type="binding site" evidence="2">
    <location>
        <position position="156"/>
    </location>
    <ligand>
        <name>Zn(2+)</name>
        <dbReference type="ChEBI" id="CHEBI:29105"/>
        <note>catalytic</note>
    </ligand>
</feature>
<feature type="binding site" evidence="2">
    <location>
        <position position="160"/>
    </location>
    <ligand>
        <name>Zn(2+)</name>
        <dbReference type="ChEBI" id="CHEBI:29105"/>
        <note>catalytic</note>
    </ligand>
</feature>
<feature type="binding site" evidence="2">
    <location>
        <position position="167"/>
    </location>
    <ligand>
        <name>Zn(2+)</name>
        <dbReference type="ChEBI" id="CHEBI:29105"/>
        <note>catalytic</note>
    </ligand>
</feature>
<feature type="site" description="Cleavage; by autolysis" evidence="2">
    <location>
        <begin position="694"/>
        <end position="695"/>
    </location>
</feature>
<feature type="glycosylation site" description="N-linked (GlcNAc...) asparagine" evidence="3">
    <location>
        <position position="503"/>
    </location>
</feature>
<feature type="glycosylation site" description="N-linked (GlcNAc...) asparagine" evidence="3">
    <location>
        <position position="514"/>
    </location>
</feature>
<feature type="glycosylation site" description="N-linked (GlcNAc...) asparagine" evidence="3">
    <location>
        <position position="770"/>
    </location>
</feature>
<feature type="glycosylation site" description="N-linked (GlcNAc...) asparagine" evidence="3">
    <location>
        <position position="804"/>
    </location>
</feature>
<feature type="glycosylation site" description="N-linked (GlcNAc...) asparagine" evidence="3">
    <location>
        <position position="810"/>
    </location>
</feature>
<feature type="glycosylation site" description="N-linked (GlcNAc...) asparagine" evidence="3">
    <location>
        <position position="836"/>
    </location>
</feature>
<feature type="glycosylation site" description="N-linked (GlcNAc...) asparagine" evidence="3">
    <location>
        <position position="885"/>
    </location>
</feature>
<feature type="sequence variant" evidence="5">
    <original>H</original>
    <variation>R</variation>
    <location>
        <position position="485"/>
    </location>
</feature>
<feature type="sequence variant" evidence="5">
    <original>V</original>
    <variation>L</variation>
    <location>
        <position position="490"/>
    </location>
</feature>
<feature type="sequence conflict" description="In Ref. 2; CAI79651." evidence="6" ref="2">
    <original>A</original>
    <variation>T</variation>
    <location>
        <position position="889"/>
    </location>
</feature>
<gene>
    <name type="primary">CLCA1</name>
</gene>
<reference key="1">
    <citation type="journal article" date="2005" name="J. Histochem. Cytochem.">
        <title>Overexpression of eCLCA1 in small airways of horses with recurrent airway obstruction.</title>
        <authorList>
            <person name="Anton F."/>
            <person name="Leverkoehne I."/>
            <person name="Mundhenk L."/>
            <person name="Thoreson W.B."/>
            <person name="Gruber A.D."/>
        </authorList>
    </citation>
    <scope>NUCLEOTIDE SEQUENCE [MRNA]</scope>
    <scope>TISSUE SPECIFICITY</scope>
    <scope>INDUCTION</scope>
    <scope>GLYCOSYLATION</scope>
    <scope>VARIANTS ARG-485 AND LEU-490</scope>
</reference>
<reference key="2">
    <citation type="submission" date="2005-04" db="EMBL/GenBank/DDBJ databases">
        <title>Chromosomal assignment of two candidate genes for equine recurrent airway obstruction (RAO).</title>
        <authorList>
            <person name="Klukowska-Roetzler J."/>
            <person name="Gerber V."/>
            <person name="Bugno M."/>
            <person name="Slota E."/>
            <person name="Robinson A.J."/>
            <person name="Guerin G."/>
            <person name="Dolf G."/>
        </authorList>
    </citation>
    <scope>NUCLEOTIDE SEQUENCE [GENOMIC DNA] OF 266-315 AND 808-894</scope>
</reference>
<keyword id="KW-0068">Autocatalytic cleavage</keyword>
<keyword id="KW-0106">Calcium</keyword>
<keyword id="KW-0109">Calcium transport</keyword>
<keyword id="KW-0868">Chloride</keyword>
<keyword id="KW-0325">Glycoprotein</keyword>
<keyword id="KW-0378">Hydrolase</keyword>
<keyword id="KW-0406">Ion transport</keyword>
<keyword id="KW-0479">Metal-binding</keyword>
<keyword id="KW-0482">Metalloprotease</keyword>
<keyword id="KW-0645">Protease</keyword>
<keyword id="KW-1185">Reference proteome</keyword>
<keyword id="KW-0964">Secreted</keyword>
<keyword id="KW-0732">Signal</keyword>
<keyword id="KW-0813">Transport</keyword>
<keyword id="KW-0862">Zinc</keyword>
<sequence length="913" mass="100134">MGSFKSSVFILVLHLLEGALSNSLIHLNNNGYEGIVIAIDPNVPEDETLIQQIKDMVTQASPYLFEATEKRFYFKNVAILVPENWKTKPEYERPKLETYKNADVLVAEPNPPGNDQPYTEQMGKCGEKGERIYFTPDFLAGKRLDEYGPQGRVFVHEWAHLRWGLFNEYNDDQKFYLSNKEIKPVKCSADIAGKNVVNHCQGGSCATKPCRRDRVTGLYAQECEFIPDEQQTEKASIMFSQSIDSVVEFCTEENHNREAPNMQNQRCNLRSTWEVIRDSEDFKKTTPMTAQPPQPTFSLLQIGQRIVCLVLDKSGSMAIGDRLKRLTQAGKLFLLQTVEQGSWVGMVTFDSAAYVQSALRQIKGGTDRDALTKSLPTVASGGTSICSGLRSAFTVIRKKYKTDGSEIVLLTDGEDNTISSCFNEVKQSGAIIHTVALGPSAAAELEELSKMTGGLQTYASDQAQNNGLIDAFGALSSGNGAVSQHSIQLVSRGSTLQNSQWMNGTVIVDSTVGNDTLFLITWTSQPPQILLWDPSGKKQDGFVVDTNTKMAYLQVPGTAKVGTWTYSLQASSQTLTLTVTSRASSATLPPVTVTSKVNKDTGKFPSPVVVYAKIHQGGLPILRATVTALIESVDGKTVTLELLDNGAGADATKDDGIYSRYFTAYNTNGRYSIKVWALGGVNAARQMGISQQNGAMYRAGRMKNGEIIWNPPRPKINIDDLLSKQVPFSRTSSGGSFVASNVPNAPIPDLFPPCQITDLKAKIQGDSLINLTWTAPGDDYDHGRADRYIIRISTNILDLRDKFNDSLQVNTTDLIPKEATSEEVFVFKPENIAFENGTDLFIAIQAVDEVDLESEISNIAQVSLFLPPQTPPETPSPSLPCPDSNITSAIPGIHILKVMWKWLGELQLSVALG</sequence>
<proteinExistence type="evidence at protein level"/>